<comment type="function">
    <text>Variant histone H3 which replaces conventional H3 in a wide range of nucleosomes in active genes. Constitutes the predominant form of histone H3 in non-dividing cells and is incorporated into chromatin independently of DNA synthesis. Deposited at sites of nucleosomal displacement throughout transcribed genes, suggesting that it represents an epigenetic imprint of transcriptionally active chromatin. Nucleosomes wrap and compact DNA into chromatin, limiting DNA accessibility to the cellular machineries which require DNA as a template. Histones thereby play a central role in transcription regulation, DNA repair, DNA replication and chromosomal stability. DNA accessibility is regulated via a complex set of post-translational modifications of histones, also called histone code, and nucleosome remodeling.</text>
</comment>
<comment type="subunit">
    <text>The nucleosome is a histone octamer containing two molecules each of H2A, H2B, H3 and H4 assembled in one H3-H4 heterotetramer and two H2A-H2B heterodimers. The octamer wraps approximately 147 bp of DNA.</text>
</comment>
<comment type="subcellular location">
    <subcellularLocation>
        <location evidence="3">Nucleus</location>
    </subcellularLocation>
    <subcellularLocation>
        <location evidence="3">Chromosome</location>
    </subcellularLocation>
    <text>Chromatin domain.</text>
</comment>
<comment type="tissue specificity">
    <text evidence="3 4">Pollen specific.</text>
</comment>
<comment type="developmental stage">
    <text evidence="3 4">Within the bicellular pollen, only detected in the vegetative cell and not in the generative cell (PubMed:15927943). Expressed in the generative cell and in uninucleate microspores (PubMed:16915513).</text>
</comment>
<comment type="PTM">
    <text evidence="1">Acetylation is generally linked to gene activation. Can be acetylated to form H3K9ac, H3K14ac, H3K18ac and H3K23ac. H3K9ac could compete with H3K9me and prevent gene silencing. H3K9ac is restricted to euchromatin (By similarity).</text>
</comment>
<comment type="PTM">
    <text evidence="1">Methylated to form mainly H3K4me, H3K9me, H3K18me, H3K23me, H3K27me and H3K36me. H3K4me1/2/3, H3K9me3, H3K27me3 and H3K36me1/2/3 are typical marks for euchromatin, whereas heterochromatic chromocenters are enriched in H3K9me1/2 and H3K27me1/2. H2BK143ub1 is probably prerequisite for H3K4me (By similarity).</text>
</comment>
<comment type="PTM">
    <text evidence="1">Can be phosphorylated to form H3S10ph, H3T11ph and H3S28ph.</text>
</comment>
<comment type="similarity">
    <text evidence="5">Belongs to the histone H3 family.</text>
</comment>
<comment type="caution">
    <text evidence="5">To ensure consistency between histone entries, we follow the 'Brno' nomenclature for histone modifications, with positions referring to those used in the literature for the 'closest' model organism. Due to slight variations in histone sequences between organisms and to the presence of initiator methionine in UniProtKB/Swiss-Prot sequences, the actual positions of modified amino acids in the sequence generally differ. In this entry the following conventions are used: H3K4me = methylated Lys-5; H3K9ac = acetylated Lys-10; H3K9me = methylated Lys-10; H3S10ph = phosphorylated Ser-11; H3T11ph = phosphorylated Thr-12; H3K14ac = acetylated Lys-15; H3K18ac = acetylated Lys-19; H3K18me = methylated Lys-19; H3K23ac = acetylated Lys-24; H3K23me = methylated Lys-24; H3K27me = methylated Lys-28; H3S28ph = phosphorylated Ser-29; H3K36me = methylated Lys-37.</text>
</comment>
<gene>
    <name type="primary">MPH3</name>
    <name type="synonym">soH3-2</name>
</gene>
<organism>
    <name type="scientific">Lilium longiflorum</name>
    <name type="common">Trumpet lily</name>
    <dbReference type="NCBI Taxonomy" id="4690"/>
    <lineage>
        <taxon>Eukaryota</taxon>
        <taxon>Viridiplantae</taxon>
        <taxon>Streptophyta</taxon>
        <taxon>Embryophyta</taxon>
        <taxon>Tracheophyta</taxon>
        <taxon>Spermatophyta</taxon>
        <taxon>Magnoliopsida</taxon>
        <taxon>Liliopsida</taxon>
        <taxon>Liliales</taxon>
        <taxon>Liliaceae</taxon>
        <taxon>Lilium</taxon>
    </lineage>
</organism>
<proteinExistence type="evidence at transcript level"/>
<sequence>MARTKQTARKSTGGKAPRKQLATKAARKSAPTTGGVKKPHRYRPGTVALREIRKYQKSTDLLIRKLPFQRLVREIAQDYKADLRFQSHAVLALQEAAEAYLVGLFEDTNLCAIHAKRVTIMPKDIQLARRIRGERA</sequence>
<evidence type="ECO:0000250" key="1"/>
<evidence type="ECO:0000256" key="2">
    <source>
        <dbReference type="SAM" id="MobiDB-lite"/>
    </source>
</evidence>
<evidence type="ECO:0000269" key="3">
    <source>
    </source>
</evidence>
<evidence type="ECO:0000269" key="4">
    <source>
    </source>
</evidence>
<evidence type="ECO:0000305" key="5"/>
<feature type="initiator methionine" description="Removed" evidence="1">
    <location>
        <position position="1"/>
    </location>
</feature>
<feature type="chain" id="PRO_0000263045" description="Histone H3.3a">
    <location>
        <begin position="2"/>
        <end position="136"/>
    </location>
</feature>
<feature type="region of interest" description="Disordered" evidence="2">
    <location>
        <begin position="1"/>
        <end position="43"/>
    </location>
</feature>
<feature type="modified residue" description="N6-methylated lysine" evidence="1">
    <location>
        <position position="5"/>
    </location>
</feature>
<feature type="modified residue" description="N6-acetyllysine; alternate" evidence="1">
    <location>
        <position position="10"/>
    </location>
</feature>
<feature type="modified residue" description="N6-methylated lysine; alternate" evidence="1">
    <location>
        <position position="10"/>
    </location>
</feature>
<feature type="modified residue" description="Phosphoserine" evidence="1">
    <location>
        <position position="11"/>
    </location>
</feature>
<feature type="modified residue" description="Phosphothreonine" evidence="1">
    <location>
        <position position="12"/>
    </location>
</feature>
<feature type="modified residue" description="N6-acetyllysine" evidence="1">
    <location>
        <position position="15"/>
    </location>
</feature>
<feature type="modified residue" description="N6-acetyllysine; alternate" evidence="1">
    <location>
        <position position="19"/>
    </location>
</feature>
<feature type="modified residue" description="N6-methylated lysine; alternate" evidence="1">
    <location>
        <position position="19"/>
    </location>
</feature>
<feature type="modified residue" description="N6-acetyllysine; alternate" evidence="1">
    <location>
        <position position="24"/>
    </location>
</feature>
<feature type="modified residue" description="N6-methylated lysine; alternate" evidence="1">
    <location>
        <position position="24"/>
    </location>
</feature>
<feature type="modified residue" description="N6-methylated lysine" evidence="1">
    <location>
        <position position="28"/>
    </location>
</feature>
<feature type="modified residue" description="Phosphoserine" evidence="1">
    <location>
        <position position="29"/>
    </location>
</feature>
<feature type="modified residue" description="N6-methylated lysine" evidence="1">
    <location>
        <position position="37"/>
    </location>
</feature>
<feature type="sequence conflict" description="In Ref. 2; BAE48436." evidence="5" ref="2">
    <original>P</original>
    <variation>L</variation>
    <location>
        <position position="31"/>
    </location>
</feature>
<accession>Q402E2</accession>
<accession>Q2Z2F1</accession>
<reference key="1">
    <citation type="journal article" date="2005" name="Plant Cell Physiol.">
        <title>A histone H3.3-like gene specifically expressed in the vegetative cell of developing lily pollen.</title>
        <authorList>
            <person name="Sano Y."/>
            <person name="Tanaka I."/>
        </authorList>
    </citation>
    <scope>NUCLEOTIDE SEQUENCE [MRNA]</scope>
    <scope>SUBCELLULAR LOCATION</scope>
    <scope>DEVELOPMENTAL STAGE</scope>
    <scope>TISSUE SPECIFICITY</scope>
    <source>
        <strain>cv. Hinomoto</strain>
    </source>
</reference>
<reference key="2">
    <citation type="journal article" date="2006" name="Plant Mol. Biol.">
        <title>Histone H3 variants in male gametic cells of lily and H3 methylation in mature pollen.</title>
        <authorList>
            <person name="Okada T."/>
            <person name="Singh M.B."/>
            <person name="Bhalla P.L."/>
        </authorList>
    </citation>
    <scope>NUCLEOTIDE SEQUENCE [GENOMIC DNA / MRNA]</scope>
    <scope>DEVELOPMENTAL STAGE</scope>
    <scope>TISSUE SPECIFICITY</scope>
    <source>
        <strain>cv. White Fox</strain>
    </source>
</reference>
<dbReference type="EMBL" id="AB195974">
    <property type="protein sequence ID" value="BAE20249.1"/>
    <property type="molecule type" value="mRNA"/>
</dbReference>
<dbReference type="EMBL" id="AB195652">
    <property type="protein sequence ID" value="BAE48435.1"/>
    <property type="molecule type" value="mRNA"/>
</dbReference>
<dbReference type="EMBL" id="AB195653">
    <property type="protein sequence ID" value="BAE48436.1"/>
    <property type="molecule type" value="Genomic_DNA"/>
</dbReference>
<dbReference type="SMR" id="Q402E2"/>
<dbReference type="GO" id="GO:0000786">
    <property type="term" value="C:nucleosome"/>
    <property type="evidence" value="ECO:0007669"/>
    <property type="project" value="UniProtKB-KW"/>
</dbReference>
<dbReference type="GO" id="GO:0005634">
    <property type="term" value="C:nucleus"/>
    <property type="evidence" value="ECO:0007669"/>
    <property type="project" value="UniProtKB-SubCell"/>
</dbReference>
<dbReference type="GO" id="GO:0003677">
    <property type="term" value="F:DNA binding"/>
    <property type="evidence" value="ECO:0007669"/>
    <property type="project" value="UniProtKB-KW"/>
</dbReference>
<dbReference type="GO" id="GO:0046982">
    <property type="term" value="F:protein heterodimerization activity"/>
    <property type="evidence" value="ECO:0007669"/>
    <property type="project" value="InterPro"/>
</dbReference>
<dbReference type="GO" id="GO:0030527">
    <property type="term" value="F:structural constituent of chromatin"/>
    <property type="evidence" value="ECO:0007669"/>
    <property type="project" value="InterPro"/>
</dbReference>
<dbReference type="CDD" id="cd22911">
    <property type="entry name" value="HFD_H3"/>
    <property type="match status" value="1"/>
</dbReference>
<dbReference type="FunFam" id="1.10.20.10:FF:000078">
    <property type="entry name" value="Histone H3"/>
    <property type="match status" value="1"/>
</dbReference>
<dbReference type="FunFam" id="1.10.20.10:FF:000044">
    <property type="entry name" value="Histone H3.3"/>
    <property type="match status" value="1"/>
</dbReference>
<dbReference type="Gene3D" id="1.10.20.10">
    <property type="entry name" value="Histone, subunit A"/>
    <property type="match status" value="1"/>
</dbReference>
<dbReference type="InterPro" id="IPR009072">
    <property type="entry name" value="Histone-fold"/>
</dbReference>
<dbReference type="InterPro" id="IPR007125">
    <property type="entry name" value="Histone_H2A/H2B/H3"/>
</dbReference>
<dbReference type="InterPro" id="IPR000164">
    <property type="entry name" value="Histone_H3/CENP-A"/>
</dbReference>
<dbReference type="PANTHER" id="PTHR11426">
    <property type="entry name" value="HISTONE H3"/>
    <property type="match status" value="1"/>
</dbReference>
<dbReference type="Pfam" id="PF00125">
    <property type="entry name" value="Histone"/>
    <property type="match status" value="1"/>
</dbReference>
<dbReference type="PRINTS" id="PR00622">
    <property type="entry name" value="HISTONEH3"/>
</dbReference>
<dbReference type="SMART" id="SM00428">
    <property type="entry name" value="H3"/>
    <property type="match status" value="1"/>
</dbReference>
<dbReference type="SUPFAM" id="SSF47113">
    <property type="entry name" value="Histone-fold"/>
    <property type="match status" value="1"/>
</dbReference>
<dbReference type="PROSITE" id="PS00322">
    <property type="entry name" value="HISTONE_H3_1"/>
    <property type="match status" value="1"/>
</dbReference>
<dbReference type="PROSITE" id="PS00959">
    <property type="entry name" value="HISTONE_H3_2"/>
    <property type="match status" value="1"/>
</dbReference>
<keyword id="KW-0007">Acetylation</keyword>
<keyword id="KW-0158">Chromosome</keyword>
<keyword id="KW-0238">DNA-binding</keyword>
<keyword id="KW-0488">Methylation</keyword>
<keyword id="KW-0544">Nucleosome core</keyword>
<keyword id="KW-0539">Nucleus</keyword>
<keyword id="KW-0597">Phosphoprotein</keyword>
<name>H33A_LILLO</name>
<protein>
    <recommendedName>
        <fullName>Histone H3.3a</fullName>
    </recommendedName>
    <alternativeName>
        <fullName>Histone soH3-2</fullName>
    </alternativeName>
    <alternativeName>
        <fullName>Somatic-like histone H3-2</fullName>
    </alternativeName>
</protein>